<name>WECA_HAEIN</name>
<feature type="chain" id="PRO_0000108948" description="Undecaprenyl-phosphate alpha-N-acetylglucosaminyl 1-phosphate transferase">
    <location>
        <begin position="1"/>
        <end position="355"/>
    </location>
</feature>
<feature type="transmembrane region" description="Helical" evidence="1">
    <location>
        <begin position="1"/>
        <end position="21"/>
    </location>
</feature>
<feature type="transmembrane region" description="Helical" evidence="1">
    <location>
        <begin position="39"/>
        <end position="59"/>
    </location>
</feature>
<feature type="transmembrane region" description="Helical" evidence="1">
    <location>
        <begin position="63"/>
        <end position="83"/>
    </location>
</feature>
<feature type="transmembrane region" description="Helical" evidence="1">
    <location>
        <begin position="123"/>
        <end position="143"/>
    </location>
</feature>
<feature type="transmembrane region" description="Helical" evidence="1">
    <location>
        <begin position="182"/>
        <end position="202"/>
    </location>
</feature>
<feature type="transmembrane region" description="Helical" evidence="1">
    <location>
        <begin position="208"/>
        <end position="228"/>
    </location>
</feature>
<feature type="transmembrane region" description="Helical" evidence="1">
    <location>
        <begin position="237"/>
        <end position="257"/>
    </location>
</feature>
<feature type="transmembrane region" description="Helical" evidence="1">
    <location>
        <begin position="315"/>
        <end position="335"/>
    </location>
</feature>
<evidence type="ECO:0000255" key="1">
    <source>
        <dbReference type="HAMAP-Rule" id="MF_02030"/>
    </source>
</evidence>
<comment type="function">
    <text evidence="1">Catalyzes the transfer of the GlcNAc-1-phosphate moiety from UDP-GlcNAc onto the carrier lipid undecaprenyl phosphate (C55-P), yielding GlcNAc-pyrophosphoryl-undecaprenyl (GlcNAc-PP-C55).</text>
</comment>
<comment type="catalytic activity">
    <reaction evidence="1">
        <text>di-trans,octa-cis-undecaprenyl phosphate + UDP-N-acetyl-alpha-D-glucosamine = N-acetyl-alpha-D-glucosaminyl-di-trans,octa-cis-undecaprenyl diphosphate + UMP</text>
        <dbReference type="Rhea" id="RHEA:28090"/>
        <dbReference type="ChEBI" id="CHEBI:57705"/>
        <dbReference type="ChEBI" id="CHEBI:57865"/>
        <dbReference type="ChEBI" id="CHEBI:60392"/>
        <dbReference type="ChEBI" id="CHEBI:62959"/>
        <dbReference type="EC" id="2.7.8.33"/>
    </reaction>
</comment>
<comment type="cofactor">
    <cofactor evidence="1">
        <name>Mg(2+)</name>
        <dbReference type="ChEBI" id="CHEBI:18420"/>
    </cofactor>
</comment>
<comment type="cofactor">
    <cofactor evidence="1">
        <name>Mn(2+)</name>
        <dbReference type="ChEBI" id="CHEBI:29035"/>
    </cofactor>
</comment>
<comment type="pathway">
    <text evidence="1">Bacterial outer membrane biogenesis; LPS O-antigen biosynthesis.</text>
</comment>
<comment type="subcellular location">
    <subcellularLocation>
        <location evidence="1">Cell inner membrane</location>
        <topology evidence="1">Multi-pass membrane protein</topology>
    </subcellularLocation>
</comment>
<comment type="similarity">
    <text evidence="1">Belongs to the glycosyltransferase 4 family. WecA subfamily.</text>
</comment>
<keyword id="KW-0997">Cell inner membrane</keyword>
<keyword id="KW-1003">Cell membrane</keyword>
<keyword id="KW-0328">Glycosyltransferase</keyword>
<keyword id="KW-0448">Lipopolysaccharide biosynthesis</keyword>
<keyword id="KW-0460">Magnesium</keyword>
<keyword id="KW-0464">Manganese</keyword>
<keyword id="KW-0472">Membrane</keyword>
<keyword id="KW-1185">Reference proteome</keyword>
<keyword id="KW-0808">Transferase</keyword>
<keyword id="KW-0812">Transmembrane</keyword>
<keyword id="KW-1133">Transmembrane helix</keyword>
<dbReference type="EC" id="2.7.8.33" evidence="1"/>
<dbReference type="EMBL" id="L42023">
    <property type="protein sequence ID" value="AAC23361.1"/>
    <property type="molecule type" value="Genomic_DNA"/>
</dbReference>
<dbReference type="PIR" id="A64138">
    <property type="entry name" value="A64138"/>
</dbReference>
<dbReference type="RefSeq" id="NP_439858.1">
    <property type="nucleotide sequence ID" value="NC_000907.1"/>
</dbReference>
<dbReference type="SMR" id="P45341"/>
<dbReference type="STRING" id="71421.HI_1716"/>
<dbReference type="EnsemblBacteria" id="AAC23361">
    <property type="protein sequence ID" value="AAC23361"/>
    <property type="gene ID" value="HI_1716"/>
</dbReference>
<dbReference type="KEGG" id="hin:HI_1716"/>
<dbReference type="PATRIC" id="fig|71421.8.peg.1795"/>
<dbReference type="eggNOG" id="COG0472">
    <property type="taxonomic scope" value="Bacteria"/>
</dbReference>
<dbReference type="HOGENOM" id="CLU_023982_1_0_6"/>
<dbReference type="OrthoDB" id="9783652at2"/>
<dbReference type="PhylomeDB" id="P45341"/>
<dbReference type="BioCyc" id="HINF71421:G1GJ1-1732-MONOMER"/>
<dbReference type="UniPathway" id="UPA00281"/>
<dbReference type="Proteomes" id="UP000000579">
    <property type="component" value="Chromosome"/>
</dbReference>
<dbReference type="GO" id="GO:0009276">
    <property type="term" value="C:Gram-negative-bacterium-type cell wall"/>
    <property type="evidence" value="ECO:0000250"/>
    <property type="project" value="UniProtKB"/>
</dbReference>
<dbReference type="GO" id="GO:0005886">
    <property type="term" value="C:plasma membrane"/>
    <property type="evidence" value="ECO:0000318"/>
    <property type="project" value="GO_Central"/>
</dbReference>
<dbReference type="GO" id="GO:0016757">
    <property type="term" value="F:glycosyltransferase activity"/>
    <property type="evidence" value="ECO:0007669"/>
    <property type="project" value="UniProtKB-KW"/>
</dbReference>
<dbReference type="GO" id="GO:0000287">
    <property type="term" value="F:magnesium ion binding"/>
    <property type="evidence" value="ECO:0000250"/>
    <property type="project" value="UniProtKB"/>
</dbReference>
<dbReference type="GO" id="GO:0030145">
    <property type="term" value="F:manganese ion binding"/>
    <property type="evidence" value="ECO:0000250"/>
    <property type="project" value="UniProtKB"/>
</dbReference>
<dbReference type="GO" id="GO:0016780">
    <property type="term" value="F:phosphotransferase activity, for other substituted phosphate groups"/>
    <property type="evidence" value="ECO:0000250"/>
    <property type="project" value="UniProtKB"/>
</dbReference>
<dbReference type="GO" id="GO:0036380">
    <property type="term" value="F:UDP-N-acetylglucosamine-undecaprenyl-phosphate N-acetylglucosaminephosphotransferase activity"/>
    <property type="evidence" value="ECO:0007669"/>
    <property type="project" value="UniProtKB-UniRule"/>
</dbReference>
<dbReference type="GO" id="GO:0044038">
    <property type="term" value="P:cell wall macromolecule biosynthetic process"/>
    <property type="evidence" value="ECO:0000250"/>
    <property type="project" value="UniProtKB"/>
</dbReference>
<dbReference type="GO" id="GO:0071555">
    <property type="term" value="P:cell wall organization"/>
    <property type="evidence" value="ECO:0000250"/>
    <property type="project" value="UniProtKB"/>
</dbReference>
<dbReference type="GO" id="GO:0009103">
    <property type="term" value="P:lipopolysaccharide biosynthetic process"/>
    <property type="evidence" value="ECO:0000250"/>
    <property type="project" value="UniProtKB"/>
</dbReference>
<dbReference type="GO" id="GO:0009243">
    <property type="term" value="P:O antigen biosynthetic process"/>
    <property type="evidence" value="ECO:0007669"/>
    <property type="project" value="UniProtKB-UniRule"/>
</dbReference>
<dbReference type="CDD" id="cd06853">
    <property type="entry name" value="GT_WecA_like"/>
    <property type="match status" value="1"/>
</dbReference>
<dbReference type="HAMAP" id="MF_02030">
    <property type="entry name" value="WecA_Gammaproteo"/>
    <property type="match status" value="1"/>
</dbReference>
<dbReference type="InterPro" id="IPR012750">
    <property type="entry name" value="ECA_WecA-rel"/>
</dbReference>
<dbReference type="InterPro" id="IPR000715">
    <property type="entry name" value="Glycosyl_transferase_4"/>
</dbReference>
<dbReference type="InterPro" id="IPR018480">
    <property type="entry name" value="PNAcMuramoyl-5peptid_Trfase_CS"/>
</dbReference>
<dbReference type="NCBIfam" id="TIGR02380">
    <property type="entry name" value="ECA_wecA"/>
    <property type="match status" value="1"/>
</dbReference>
<dbReference type="PANTHER" id="PTHR22926">
    <property type="entry name" value="PHOSPHO-N-ACETYLMURAMOYL-PENTAPEPTIDE-TRANSFERASE"/>
    <property type="match status" value="1"/>
</dbReference>
<dbReference type="PANTHER" id="PTHR22926:SF3">
    <property type="entry name" value="UNDECAPRENYL-PHOSPHATE ALPHA-N-ACETYLGLUCOSAMINYL 1-PHOSPHATE TRANSFERASE"/>
    <property type="match status" value="1"/>
</dbReference>
<dbReference type="Pfam" id="PF00953">
    <property type="entry name" value="Glycos_transf_4"/>
    <property type="match status" value="1"/>
</dbReference>
<gene>
    <name evidence="1" type="primary">wecA</name>
    <name type="synonym">rfe</name>
    <name type="ordered locus">HI_1716</name>
</gene>
<sequence length="355" mass="40070">MLSIFVTFLGAFLTLIVMRPLANWIGLVDKPNYRKRHQGTIPLIGGASLFVGNLCYYLMEWDQLRLPYLYLFSIFVLLAIGILDDRFDISPFLRAGIQAILAILMIDLGNIYLDHLGQILGPFQLTLGSIGLIITVFATIAIINAFNMIDGIDGLLGGLSCVSFAAIGILMYRDGQMDMAHWSFALIVSILPYLMLNLGIPFGPKYKVFMGDAGSTLIGFTIIWILLLSTQGKGHPMNPVTALWIIAIPLIDMVAIIYRRVRKGKSPFRPDRLHVHHLMVRAGLTSRQAFLLITFVSAVCATIGILGEVYYVNEWAMFVGFFILFFLYVYSITHAWRITRWVRRMKRRAKRLKKA</sequence>
<protein>
    <recommendedName>
        <fullName evidence="1">Undecaprenyl-phosphate alpha-N-acetylglucosaminyl 1-phosphate transferase</fullName>
        <ecNumber evidence="1">2.7.8.33</ecNumber>
    </recommendedName>
    <alternativeName>
        <fullName evidence="1">UDP-GlcNAc:undecaprenyl-phosphate GlcNAc-1-phosphate transferase</fullName>
    </alternativeName>
    <alternativeName>
        <fullName evidence="1">Undecaprenyl-phosphate GlcNAc-1-phosphate transferase</fullName>
    </alternativeName>
</protein>
<organism>
    <name type="scientific">Haemophilus influenzae (strain ATCC 51907 / DSM 11121 / KW20 / Rd)</name>
    <dbReference type="NCBI Taxonomy" id="71421"/>
    <lineage>
        <taxon>Bacteria</taxon>
        <taxon>Pseudomonadati</taxon>
        <taxon>Pseudomonadota</taxon>
        <taxon>Gammaproteobacteria</taxon>
        <taxon>Pasteurellales</taxon>
        <taxon>Pasteurellaceae</taxon>
        <taxon>Haemophilus</taxon>
    </lineage>
</organism>
<accession>P45341</accession>
<reference key="1">
    <citation type="journal article" date="1995" name="Science">
        <title>Whole-genome random sequencing and assembly of Haemophilus influenzae Rd.</title>
        <authorList>
            <person name="Fleischmann R.D."/>
            <person name="Adams M.D."/>
            <person name="White O."/>
            <person name="Clayton R.A."/>
            <person name="Kirkness E.F."/>
            <person name="Kerlavage A.R."/>
            <person name="Bult C.J."/>
            <person name="Tomb J.-F."/>
            <person name="Dougherty B.A."/>
            <person name="Merrick J.M."/>
            <person name="McKenney K."/>
            <person name="Sutton G.G."/>
            <person name="FitzHugh W."/>
            <person name="Fields C.A."/>
            <person name="Gocayne J.D."/>
            <person name="Scott J.D."/>
            <person name="Shirley R."/>
            <person name="Liu L.-I."/>
            <person name="Glodek A."/>
            <person name="Kelley J.M."/>
            <person name="Weidman J.F."/>
            <person name="Phillips C.A."/>
            <person name="Spriggs T."/>
            <person name="Hedblom E."/>
            <person name="Cotton M.D."/>
            <person name="Utterback T.R."/>
            <person name="Hanna M.C."/>
            <person name="Nguyen D.T."/>
            <person name="Saudek D.M."/>
            <person name="Brandon R.C."/>
            <person name="Fine L.D."/>
            <person name="Fritchman J.L."/>
            <person name="Fuhrmann J.L."/>
            <person name="Geoghagen N.S.M."/>
            <person name="Gnehm C.L."/>
            <person name="McDonald L.A."/>
            <person name="Small K.V."/>
            <person name="Fraser C.M."/>
            <person name="Smith H.O."/>
            <person name="Venter J.C."/>
        </authorList>
    </citation>
    <scope>NUCLEOTIDE SEQUENCE [LARGE SCALE GENOMIC DNA]</scope>
    <source>
        <strain>ATCC 51907 / DSM 11121 / KW20 / Rd</strain>
    </source>
</reference>
<proteinExistence type="inferred from homology"/>